<organism>
    <name type="scientific">Burkholderia orbicola (strain AU 1054)</name>
    <dbReference type="NCBI Taxonomy" id="331271"/>
    <lineage>
        <taxon>Bacteria</taxon>
        <taxon>Pseudomonadati</taxon>
        <taxon>Pseudomonadota</taxon>
        <taxon>Betaproteobacteria</taxon>
        <taxon>Burkholderiales</taxon>
        <taxon>Burkholderiaceae</taxon>
        <taxon>Burkholderia</taxon>
        <taxon>Burkholderia cepacia complex</taxon>
        <taxon>Burkholderia orbicola</taxon>
    </lineage>
</organism>
<name>HTPX_BURO1</name>
<protein>
    <recommendedName>
        <fullName evidence="1">Protease HtpX homolog</fullName>
        <ecNumber evidence="1">3.4.24.-</ecNumber>
    </recommendedName>
</protein>
<comment type="cofactor">
    <cofactor evidence="1">
        <name>Zn(2+)</name>
        <dbReference type="ChEBI" id="CHEBI:29105"/>
    </cofactor>
    <text evidence="1">Binds 1 zinc ion per subunit.</text>
</comment>
<comment type="subcellular location">
    <subcellularLocation>
        <location evidence="1">Cell inner membrane</location>
        <topology evidence="1">Multi-pass membrane protein</topology>
    </subcellularLocation>
</comment>
<comment type="similarity">
    <text evidence="1">Belongs to the peptidase M48B family.</text>
</comment>
<reference key="1">
    <citation type="submission" date="2006-05" db="EMBL/GenBank/DDBJ databases">
        <title>Complete sequence of chromosome 1 of Burkholderia cenocepacia AU 1054.</title>
        <authorList>
            <consortium name="US DOE Joint Genome Institute"/>
            <person name="Copeland A."/>
            <person name="Lucas S."/>
            <person name="Lapidus A."/>
            <person name="Barry K."/>
            <person name="Detter J.C."/>
            <person name="Glavina del Rio T."/>
            <person name="Hammon N."/>
            <person name="Israni S."/>
            <person name="Dalin E."/>
            <person name="Tice H."/>
            <person name="Pitluck S."/>
            <person name="Chain P."/>
            <person name="Malfatti S."/>
            <person name="Shin M."/>
            <person name="Vergez L."/>
            <person name="Schmutz J."/>
            <person name="Larimer F."/>
            <person name="Land M."/>
            <person name="Hauser L."/>
            <person name="Kyrpides N."/>
            <person name="Lykidis A."/>
            <person name="LiPuma J.J."/>
            <person name="Konstantinidis K."/>
            <person name="Tiedje J.M."/>
            <person name="Richardson P."/>
        </authorList>
    </citation>
    <scope>NUCLEOTIDE SEQUENCE [LARGE SCALE GENOMIC DNA]</scope>
    <source>
        <strain>AU 1054</strain>
    </source>
</reference>
<dbReference type="EC" id="3.4.24.-" evidence="1"/>
<dbReference type="EMBL" id="CP000378">
    <property type="protein sequence ID" value="ABF77409.1"/>
    <property type="molecule type" value="Genomic_DNA"/>
</dbReference>
<dbReference type="SMR" id="Q1BSJ6"/>
<dbReference type="HOGENOM" id="CLU_042266_3_0_4"/>
<dbReference type="GO" id="GO:0005886">
    <property type="term" value="C:plasma membrane"/>
    <property type="evidence" value="ECO:0007669"/>
    <property type="project" value="UniProtKB-SubCell"/>
</dbReference>
<dbReference type="GO" id="GO:0004222">
    <property type="term" value="F:metalloendopeptidase activity"/>
    <property type="evidence" value="ECO:0007669"/>
    <property type="project" value="UniProtKB-UniRule"/>
</dbReference>
<dbReference type="GO" id="GO:0008270">
    <property type="term" value="F:zinc ion binding"/>
    <property type="evidence" value="ECO:0007669"/>
    <property type="project" value="UniProtKB-UniRule"/>
</dbReference>
<dbReference type="GO" id="GO:0006508">
    <property type="term" value="P:proteolysis"/>
    <property type="evidence" value="ECO:0007669"/>
    <property type="project" value="UniProtKB-KW"/>
</dbReference>
<dbReference type="CDD" id="cd07336">
    <property type="entry name" value="M48B_HtpX_like"/>
    <property type="match status" value="1"/>
</dbReference>
<dbReference type="Gene3D" id="3.30.2010.10">
    <property type="entry name" value="Metalloproteases ('zincins'), catalytic domain"/>
    <property type="match status" value="1"/>
</dbReference>
<dbReference type="HAMAP" id="MF_00188">
    <property type="entry name" value="Pept_M48_protease_HtpX"/>
    <property type="match status" value="1"/>
</dbReference>
<dbReference type="InterPro" id="IPR050083">
    <property type="entry name" value="HtpX_protease"/>
</dbReference>
<dbReference type="InterPro" id="IPR022919">
    <property type="entry name" value="Pept_M48_protease_HtpX"/>
</dbReference>
<dbReference type="InterPro" id="IPR001915">
    <property type="entry name" value="Peptidase_M48"/>
</dbReference>
<dbReference type="NCBIfam" id="NF002363">
    <property type="entry name" value="PRK01345.1"/>
    <property type="match status" value="1"/>
</dbReference>
<dbReference type="NCBIfam" id="NF002826">
    <property type="entry name" value="PRK03001.1"/>
    <property type="match status" value="1"/>
</dbReference>
<dbReference type="PANTHER" id="PTHR43221">
    <property type="entry name" value="PROTEASE HTPX"/>
    <property type="match status" value="1"/>
</dbReference>
<dbReference type="PANTHER" id="PTHR43221:SF1">
    <property type="entry name" value="PROTEASE HTPX"/>
    <property type="match status" value="1"/>
</dbReference>
<dbReference type="Pfam" id="PF01435">
    <property type="entry name" value="Peptidase_M48"/>
    <property type="match status" value="1"/>
</dbReference>
<sequence length="285" mass="30967">MFNWVKTAMLMAAITALFIVIGGMIGGSRGMTIALLFALGMNFFSYWFSDKMVLRMYNAQEVDENTAPQFYRMVRELATRANLPMPRVYLINEDAPNAFATGRNPEHAAVAATTGILRVLSEREMRGVMAHELAHVKHRDILISTITATMAGAISALANFAMFFGGRDENGRPANPIAGIAVALLAPIAGALIQMAISRAREFEADRGGAQISGDPQSLATALDKIHRYAAGIPFQAAEAHPATAQMMIMNPLHGGGLQNLFSTHPATEERIARLMEMARTGRFE</sequence>
<gene>
    <name evidence="1" type="primary">htpX</name>
    <name type="ordered locus">Bcen_2510</name>
</gene>
<evidence type="ECO:0000255" key="1">
    <source>
        <dbReference type="HAMAP-Rule" id="MF_00188"/>
    </source>
</evidence>
<keyword id="KW-0997">Cell inner membrane</keyword>
<keyword id="KW-1003">Cell membrane</keyword>
<keyword id="KW-0378">Hydrolase</keyword>
<keyword id="KW-0472">Membrane</keyword>
<keyword id="KW-0479">Metal-binding</keyword>
<keyword id="KW-0482">Metalloprotease</keyword>
<keyword id="KW-0645">Protease</keyword>
<keyword id="KW-0812">Transmembrane</keyword>
<keyword id="KW-1133">Transmembrane helix</keyword>
<keyword id="KW-0862">Zinc</keyword>
<accession>Q1BSJ6</accession>
<proteinExistence type="inferred from homology"/>
<feature type="chain" id="PRO_1000077448" description="Protease HtpX homolog">
    <location>
        <begin position="1"/>
        <end position="285"/>
    </location>
</feature>
<feature type="transmembrane region" description="Helical" evidence="1">
    <location>
        <begin position="7"/>
        <end position="27"/>
    </location>
</feature>
<feature type="transmembrane region" description="Helical" evidence="1">
    <location>
        <begin position="30"/>
        <end position="50"/>
    </location>
</feature>
<feature type="transmembrane region" description="Helical" evidence="1">
    <location>
        <begin position="146"/>
        <end position="166"/>
    </location>
</feature>
<feature type="transmembrane region" description="Helical" evidence="1">
    <location>
        <begin position="177"/>
        <end position="197"/>
    </location>
</feature>
<feature type="active site" evidence="1">
    <location>
        <position position="132"/>
    </location>
</feature>
<feature type="binding site" evidence="1">
    <location>
        <position position="131"/>
    </location>
    <ligand>
        <name>Zn(2+)</name>
        <dbReference type="ChEBI" id="CHEBI:29105"/>
        <note>catalytic</note>
    </ligand>
</feature>
<feature type="binding site" evidence="1">
    <location>
        <position position="135"/>
    </location>
    <ligand>
        <name>Zn(2+)</name>
        <dbReference type="ChEBI" id="CHEBI:29105"/>
        <note>catalytic</note>
    </ligand>
</feature>
<feature type="binding site" evidence="1">
    <location>
        <position position="202"/>
    </location>
    <ligand>
        <name>Zn(2+)</name>
        <dbReference type="ChEBI" id="CHEBI:29105"/>
        <note>catalytic</note>
    </ligand>
</feature>